<protein>
    <recommendedName>
        <fullName>FLRFamide</fullName>
    </recommendedName>
</protein>
<dbReference type="GO" id="GO:0005576">
    <property type="term" value="C:extracellular region"/>
    <property type="evidence" value="ECO:0007669"/>
    <property type="project" value="UniProtKB-SubCell"/>
</dbReference>
<dbReference type="GO" id="GO:0007218">
    <property type="term" value="P:neuropeptide signaling pathway"/>
    <property type="evidence" value="ECO:0007669"/>
    <property type="project" value="UniProtKB-KW"/>
</dbReference>
<organism>
    <name type="scientific">Hirudo medicinalis</name>
    <name type="common">Medicinal leech</name>
    <dbReference type="NCBI Taxonomy" id="6421"/>
    <lineage>
        <taxon>Eukaryota</taxon>
        <taxon>Metazoa</taxon>
        <taxon>Spiralia</taxon>
        <taxon>Lophotrochozoa</taxon>
        <taxon>Annelida</taxon>
        <taxon>Clitellata</taxon>
        <taxon>Hirudinea</taxon>
        <taxon>Hirudinida</taxon>
        <taxon>Hirudiniformes</taxon>
        <taxon>Hirudinidae</taxon>
        <taxon>Hirudo</taxon>
    </lineage>
</organism>
<evidence type="ECO:0000269" key="1">
    <source>
    </source>
</evidence>
<evidence type="ECO:0000305" key="2"/>
<accession>P69137</accession>
<accession>P42561</accession>
<feature type="peptide" id="PRO_0000043652" description="FLRFamide">
    <location>
        <begin position="1"/>
        <end position="4"/>
    </location>
</feature>
<feature type="modified residue" description="Phenylalanine amide" evidence="1">
    <location>
        <position position="4"/>
    </location>
</feature>
<reference key="1">
    <citation type="journal article" date="1991" name="Peptides">
        <title>Identification of RFamide neuropeptides in the medicinal leech.</title>
        <authorList>
            <person name="Evans B.D."/>
            <person name="Pohl J."/>
            <person name="Kartsonis M.A."/>
            <person name="Calabrese R.L."/>
        </authorList>
    </citation>
    <scope>PROTEIN SEQUENCE</scope>
    <scope>AMIDATION AT PHE-4</scope>
</reference>
<comment type="subcellular location">
    <subcellularLocation>
        <location>Secreted</location>
    </subcellularLocation>
</comment>
<comment type="similarity">
    <text evidence="2">Belongs to the FARP (FMRFamide related peptide) family.</text>
</comment>
<proteinExistence type="evidence at protein level"/>
<name>FLRF_HIRME</name>
<sequence length="4" mass="582">FLRF</sequence>
<keyword id="KW-0027">Amidation</keyword>
<keyword id="KW-0903">Direct protein sequencing</keyword>
<keyword id="KW-0527">Neuropeptide</keyword>
<keyword id="KW-0964">Secreted</keyword>